<feature type="chain" id="PRO_1000054713" description="Large ribosomal subunit protein uL16">
    <location>
        <begin position="1"/>
        <end position="144"/>
    </location>
</feature>
<feature type="region of interest" description="Disordered" evidence="2">
    <location>
        <begin position="1"/>
        <end position="23"/>
    </location>
</feature>
<feature type="compositionally biased region" description="Basic residues" evidence="2">
    <location>
        <begin position="1"/>
        <end position="19"/>
    </location>
</feature>
<gene>
    <name evidence="1" type="primary">rplP</name>
    <name type="ordered locus">SAHV_2227</name>
</gene>
<name>RL16_STAA1</name>
<sequence>MLLPKRVKYRRQHRPKTTGRSKGGNYVTFGEFGLQATTTSWITSRQIESARIAMTRYMKRGGKVWIKIFPHTPYTKKPLEVRMGAGKGAVEGWIAVVKPGRILFEVAGVSEEVAREALRLASHKLPVKTKFVKREELGGETNES</sequence>
<keyword id="KW-0687">Ribonucleoprotein</keyword>
<keyword id="KW-0689">Ribosomal protein</keyword>
<keyword id="KW-0694">RNA-binding</keyword>
<keyword id="KW-0699">rRNA-binding</keyword>
<keyword id="KW-0820">tRNA-binding</keyword>
<dbReference type="EMBL" id="AP009324">
    <property type="protein sequence ID" value="BAF79110.1"/>
    <property type="molecule type" value="Genomic_DNA"/>
</dbReference>
<dbReference type="RefSeq" id="WP_000926310.1">
    <property type="nucleotide sequence ID" value="NZ_CTYB01000025.1"/>
</dbReference>
<dbReference type="SMR" id="A7X5F4"/>
<dbReference type="GeneID" id="98346555"/>
<dbReference type="KEGG" id="saw:SAHV_2227"/>
<dbReference type="HOGENOM" id="CLU_078858_2_1_9"/>
<dbReference type="GO" id="GO:0022625">
    <property type="term" value="C:cytosolic large ribosomal subunit"/>
    <property type="evidence" value="ECO:0007669"/>
    <property type="project" value="TreeGrafter"/>
</dbReference>
<dbReference type="GO" id="GO:0019843">
    <property type="term" value="F:rRNA binding"/>
    <property type="evidence" value="ECO:0007669"/>
    <property type="project" value="UniProtKB-UniRule"/>
</dbReference>
<dbReference type="GO" id="GO:0003735">
    <property type="term" value="F:structural constituent of ribosome"/>
    <property type="evidence" value="ECO:0007669"/>
    <property type="project" value="InterPro"/>
</dbReference>
<dbReference type="GO" id="GO:0000049">
    <property type="term" value="F:tRNA binding"/>
    <property type="evidence" value="ECO:0007669"/>
    <property type="project" value="UniProtKB-KW"/>
</dbReference>
<dbReference type="GO" id="GO:0006412">
    <property type="term" value="P:translation"/>
    <property type="evidence" value="ECO:0007669"/>
    <property type="project" value="UniProtKB-UniRule"/>
</dbReference>
<dbReference type="CDD" id="cd01433">
    <property type="entry name" value="Ribosomal_L16_L10e"/>
    <property type="match status" value="1"/>
</dbReference>
<dbReference type="FunFam" id="3.90.1170.10:FF:000001">
    <property type="entry name" value="50S ribosomal protein L16"/>
    <property type="match status" value="1"/>
</dbReference>
<dbReference type="Gene3D" id="3.90.1170.10">
    <property type="entry name" value="Ribosomal protein L10e/L16"/>
    <property type="match status" value="1"/>
</dbReference>
<dbReference type="HAMAP" id="MF_01342">
    <property type="entry name" value="Ribosomal_uL16"/>
    <property type="match status" value="1"/>
</dbReference>
<dbReference type="InterPro" id="IPR047873">
    <property type="entry name" value="Ribosomal_uL16"/>
</dbReference>
<dbReference type="InterPro" id="IPR000114">
    <property type="entry name" value="Ribosomal_uL16_bact-type"/>
</dbReference>
<dbReference type="InterPro" id="IPR020798">
    <property type="entry name" value="Ribosomal_uL16_CS"/>
</dbReference>
<dbReference type="InterPro" id="IPR016180">
    <property type="entry name" value="Ribosomal_uL16_dom"/>
</dbReference>
<dbReference type="InterPro" id="IPR036920">
    <property type="entry name" value="Ribosomal_uL16_sf"/>
</dbReference>
<dbReference type="NCBIfam" id="TIGR01164">
    <property type="entry name" value="rplP_bact"/>
    <property type="match status" value="1"/>
</dbReference>
<dbReference type="PANTHER" id="PTHR12220">
    <property type="entry name" value="50S/60S RIBOSOMAL PROTEIN L16"/>
    <property type="match status" value="1"/>
</dbReference>
<dbReference type="PANTHER" id="PTHR12220:SF13">
    <property type="entry name" value="LARGE RIBOSOMAL SUBUNIT PROTEIN UL16M"/>
    <property type="match status" value="1"/>
</dbReference>
<dbReference type="Pfam" id="PF00252">
    <property type="entry name" value="Ribosomal_L16"/>
    <property type="match status" value="1"/>
</dbReference>
<dbReference type="PRINTS" id="PR00060">
    <property type="entry name" value="RIBOSOMALL16"/>
</dbReference>
<dbReference type="SUPFAM" id="SSF54686">
    <property type="entry name" value="Ribosomal protein L16p/L10e"/>
    <property type="match status" value="1"/>
</dbReference>
<dbReference type="PROSITE" id="PS00586">
    <property type="entry name" value="RIBOSOMAL_L16_1"/>
    <property type="match status" value="1"/>
</dbReference>
<dbReference type="PROSITE" id="PS00701">
    <property type="entry name" value="RIBOSOMAL_L16_2"/>
    <property type="match status" value="1"/>
</dbReference>
<protein>
    <recommendedName>
        <fullName evidence="1">Large ribosomal subunit protein uL16</fullName>
    </recommendedName>
    <alternativeName>
        <fullName evidence="3">50S ribosomal protein L16</fullName>
    </alternativeName>
</protein>
<proteinExistence type="inferred from homology"/>
<accession>A7X5F4</accession>
<evidence type="ECO:0000255" key="1">
    <source>
        <dbReference type="HAMAP-Rule" id="MF_01342"/>
    </source>
</evidence>
<evidence type="ECO:0000256" key="2">
    <source>
        <dbReference type="SAM" id="MobiDB-lite"/>
    </source>
</evidence>
<evidence type="ECO:0000305" key="3"/>
<comment type="function">
    <text evidence="1">Binds 23S rRNA and is also seen to make contacts with the A and possibly P site tRNAs.</text>
</comment>
<comment type="subunit">
    <text evidence="1">Part of the 50S ribosomal subunit.</text>
</comment>
<comment type="similarity">
    <text evidence="1">Belongs to the universal ribosomal protein uL16 family.</text>
</comment>
<reference key="1">
    <citation type="journal article" date="2008" name="Antimicrob. Agents Chemother.">
        <title>Mutated response regulator graR is responsible for phenotypic conversion of Staphylococcus aureus from heterogeneous vancomycin-intermediate resistance to vancomycin-intermediate resistance.</title>
        <authorList>
            <person name="Neoh H.-M."/>
            <person name="Cui L."/>
            <person name="Yuzawa H."/>
            <person name="Takeuchi F."/>
            <person name="Matsuo M."/>
            <person name="Hiramatsu K."/>
        </authorList>
    </citation>
    <scope>NUCLEOTIDE SEQUENCE [LARGE SCALE GENOMIC DNA]</scope>
    <source>
        <strain>Mu3 / ATCC 700698</strain>
    </source>
</reference>
<organism>
    <name type="scientific">Staphylococcus aureus (strain Mu3 / ATCC 700698)</name>
    <dbReference type="NCBI Taxonomy" id="418127"/>
    <lineage>
        <taxon>Bacteria</taxon>
        <taxon>Bacillati</taxon>
        <taxon>Bacillota</taxon>
        <taxon>Bacilli</taxon>
        <taxon>Bacillales</taxon>
        <taxon>Staphylococcaceae</taxon>
        <taxon>Staphylococcus</taxon>
    </lineage>
</organism>